<sequence>MEELVSCHHLPLLCLQSSVPPNGCLTFFQDSACQRCSHSEFSNGHPLNDVSLQNDVAVNPIVAKSIDPSADLQLLPLLESVKEEPTLSIIVVGASGDLAKKKIFPALFALFYENCLPENFTVFGFSRTEMNDEELRTMISKTLTCRIDQRENCGEKMDHFLQRCFYHSGQYNSEDDFSGLDCKLKEKEAGRLQNRLFYLSIPPNIFVDVVRCVSHRASSASGWTRVIVEKPFGRDSDSSRELTRSFKQYLSEDQIFRIDHYLGKELVENLSVLRFSNLVFEPLWSRNYIRNVQLIFSEDFGTEGRGGYFDNYGIIRDIMQNHLLQILALFAMETPVSLDAEDIRNEKVKVLRSMKPLKLQDVVVGQYKGHSKGNKSYSGYTDDPTVPNNSVTPTFAAAALFIDNARWDGVPFLMKAGKALHTKRAEIRVQFRHVPGNLYKKTFGTDLDKATNELVLRVQPDEAIYLKINNKVPGLGMRLDRTDLNLCYSTRYRGEIPDAYERLLLDAIEGERRLFIRSDKLDAAWSLFTPLLKELEEKKVAPELYPYGSRGPVGAHYLAAKHNVRWGDLSGEDS</sequence>
<accession>O24357</accession>
<comment type="function">
    <text evidence="4">Catalyzes the rate-limiting step of the oxidative pentose-phosphate pathway, which represents a route for the dissimilation of carbohydrates besides glycolysis. The main function of this enzyme is to provide reducing power (NADPH) and pentose phosphates for fatty acid and nucleic acid synthesis which are involved in membrane synthesis and cell division.</text>
</comment>
<comment type="catalytic activity">
    <reaction evidence="4">
        <text>D-glucose 6-phosphate + NADP(+) = 6-phospho-D-glucono-1,5-lactone + NADPH + H(+)</text>
        <dbReference type="Rhea" id="RHEA:15841"/>
        <dbReference type="ChEBI" id="CHEBI:15378"/>
        <dbReference type="ChEBI" id="CHEBI:57783"/>
        <dbReference type="ChEBI" id="CHEBI:57955"/>
        <dbReference type="ChEBI" id="CHEBI:58349"/>
        <dbReference type="ChEBI" id="CHEBI:61548"/>
        <dbReference type="EC" id="1.1.1.49"/>
    </reaction>
</comment>
<comment type="activity regulation">
    <text evidence="5">Regulated by metabolites. Post-translationally inactivated by cysteine-mediated redox modification via the ferredoxin-thioredoxin system in the light and this avoids futile cycles with photosynthetic CO2 fixation (By similarity).</text>
</comment>
<comment type="pathway">
    <text evidence="7">Carbohydrate degradation; pentose phosphate pathway; D-ribulose 5-phosphate from D-glucose 6-phosphate (oxidative stage): step 1/3.</text>
</comment>
<comment type="subunit">
    <text evidence="2">Homodimer.</text>
</comment>
<comment type="subcellular location">
    <subcellularLocation>
        <location evidence="1">Plastid</location>
        <location evidence="1">Chloroplast</location>
    </subcellularLocation>
</comment>
<comment type="similarity">
    <text evidence="7">Belongs to the glucose-6-phosphate dehydrogenase family.</text>
</comment>
<gene>
    <name type="primary">G6PD</name>
</gene>
<protein>
    <recommendedName>
        <fullName>Glucose-6-phosphate 1-dehydrogenase, chloroplastic</fullName>
        <shortName>G6PD</shortName>
        <ecNumber evidence="4">1.1.1.49</ecNumber>
    </recommendedName>
</protein>
<evidence type="ECO:0000250" key="1"/>
<evidence type="ECO:0000250" key="2">
    <source>
        <dbReference type="UniProtKB" id="P11411"/>
    </source>
</evidence>
<evidence type="ECO:0000250" key="3">
    <source>
        <dbReference type="UniProtKB" id="P11413"/>
    </source>
</evidence>
<evidence type="ECO:0000250" key="4">
    <source>
        <dbReference type="UniProtKB" id="Q43727"/>
    </source>
</evidence>
<evidence type="ECO:0000250" key="5">
    <source>
        <dbReference type="UniProtKB" id="Q43839"/>
    </source>
</evidence>
<evidence type="ECO:0000255" key="6"/>
<evidence type="ECO:0000305" key="7"/>
<dbReference type="EC" id="1.1.1.49" evidence="4"/>
<dbReference type="EMBL" id="AJ000182">
    <property type="protein sequence ID" value="CAA03939.1"/>
    <property type="molecule type" value="mRNA"/>
</dbReference>
<dbReference type="PIR" id="T09088">
    <property type="entry name" value="T09088"/>
</dbReference>
<dbReference type="SMR" id="O24357"/>
<dbReference type="UniPathway" id="UPA00115">
    <property type="reaction ID" value="UER00408"/>
</dbReference>
<dbReference type="Proteomes" id="UP001155700">
    <property type="component" value="Unplaced"/>
</dbReference>
<dbReference type="GO" id="GO:0009570">
    <property type="term" value="C:chloroplast stroma"/>
    <property type="evidence" value="ECO:0007669"/>
    <property type="project" value="TreeGrafter"/>
</dbReference>
<dbReference type="GO" id="GO:0004345">
    <property type="term" value="F:glucose-6-phosphate dehydrogenase activity"/>
    <property type="evidence" value="ECO:0000318"/>
    <property type="project" value="GO_Central"/>
</dbReference>
<dbReference type="GO" id="GO:0050661">
    <property type="term" value="F:NADP binding"/>
    <property type="evidence" value="ECO:0007669"/>
    <property type="project" value="InterPro"/>
</dbReference>
<dbReference type="GO" id="GO:0006006">
    <property type="term" value="P:glucose metabolic process"/>
    <property type="evidence" value="ECO:0000318"/>
    <property type="project" value="GO_Central"/>
</dbReference>
<dbReference type="GO" id="GO:0009051">
    <property type="term" value="P:pentose-phosphate shunt, oxidative branch"/>
    <property type="evidence" value="ECO:0000318"/>
    <property type="project" value="GO_Central"/>
</dbReference>
<dbReference type="FunFam" id="3.30.360.10:FF:000018">
    <property type="entry name" value="Glucose-6-phosphate 1-dehydrogenase"/>
    <property type="match status" value="1"/>
</dbReference>
<dbReference type="FunFam" id="3.40.50.720:FF:000222">
    <property type="entry name" value="Glucose-6-phosphate 1-dehydrogenase"/>
    <property type="match status" value="1"/>
</dbReference>
<dbReference type="Gene3D" id="3.30.360.10">
    <property type="entry name" value="Dihydrodipicolinate Reductase, domain 2"/>
    <property type="match status" value="1"/>
</dbReference>
<dbReference type="Gene3D" id="3.40.50.720">
    <property type="entry name" value="NAD(P)-binding Rossmann-like Domain"/>
    <property type="match status" value="1"/>
</dbReference>
<dbReference type="HAMAP" id="MF_00966">
    <property type="entry name" value="G6PD"/>
    <property type="match status" value="1"/>
</dbReference>
<dbReference type="InterPro" id="IPR001282">
    <property type="entry name" value="G6P_DH"/>
</dbReference>
<dbReference type="InterPro" id="IPR019796">
    <property type="entry name" value="G6P_DH_AS"/>
</dbReference>
<dbReference type="InterPro" id="IPR022675">
    <property type="entry name" value="G6P_DH_C"/>
</dbReference>
<dbReference type="InterPro" id="IPR022674">
    <property type="entry name" value="G6P_DH_NAD-bd"/>
</dbReference>
<dbReference type="InterPro" id="IPR036291">
    <property type="entry name" value="NAD(P)-bd_dom_sf"/>
</dbReference>
<dbReference type="NCBIfam" id="TIGR00871">
    <property type="entry name" value="zwf"/>
    <property type="match status" value="1"/>
</dbReference>
<dbReference type="PANTHER" id="PTHR23429:SF13">
    <property type="entry name" value="GLUCOSE-6-PHOSPHATE 1-DEHYDROGENASE 1, CHLOROPLASTIC"/>
    <property type="match status" value="1"/>
</dbReference>
<dbReference type="PANTHER" id="PTHR23429">
    <property type="entry name" value="GLUCOSE-6-PHOSPHATE 1-DEHYDROGENASE G6PD"/>
    <property type="match status" value="1"/>
</dbReference>
<dbReference type="Pfam" id="PF02781">
    <property type="entry name" value="G6PD_C"/>
    <property type="match status" value="1"/>
</dbReference>
<dbReference type="Pfam" id="PF00479">
    <property type="entry name" value="G6PD_N"/>
    <property type="match status" value="1"/>
</dbReference>
<dbReference type="PIRSF" id="PIRSF000110">
    <property type="entry name" value="G6PD"/>
    <property type="match status" value="1"/>
</dbReference>
<dbReference type="PRINTS" id="PR00079">
    <property type="entry name" value="G6PDHDRGNASE"/>
</dbReference>
<dbReference type="SUPFAM" id="SSF55347">
    <property type="entry name" value="Glyceraldehyde-3-phosphate dehydrogenase-like, C-terminal domain"/>
    <property type="match status" value="1"/>
</dbReference>
<dbReference type="SUPFAM" id="SSF51735">
    <property type="entry name" value="NAD(P)-binding Rossmann-fold domains"/>
    <property type="match status" value="1"/>
</dbReference>
<dbReference type="PROSITE" id="PS00069">
    <property type="entry name" value="G6P_DEHYDROGENASE"/>
    <property type="match status" value="1"/>
</dbReference>
<keyword id="KW-0119">Carbohydrate metabolism</keyword>
<keyword id="KW-0150">Chloroplast</keyword>
<keyword id="KW-1015">Disulfide bond</keyword>
<keyword id="KW-0313">Glucose metabolism</keyword>
<keyword id="KW-0521">NADP</keyword>
<keyword id="KW-0560">Oxidoreductase</keyword>
<keyword id="KW-0934">Plastid</keyword>
<keyword id="KW-1185">Reference proteome</keyword>
<keyword id="KW-0809">Transit peptide</keyword>
<name>G6PDC_SPIOL</name>
<reference key="1">
    <citation type="submission" date="1997-07" db="EMBL/GenBank/DDBJ databases">
        <authorList>
            <person name="Fink A."/>
            <person name="Diogon T."/>
            <person name="Perroud P.F."/>
            <person name="Crespi P."/>
            <person name="Greppin H."/>
        </authorList>
    </citation>
    <scope>NUCLEOTIDE SEQUENCE [MRNA]</scope>
    <source>
        <strain>cv. Matador</strain>
        <tissue>Leaf</tissue>
    </source>
</reference>
<organism>
    <name type="scientific">Spinacia oleracea</name>
    <name type="common">Spinach</name>
    <dbReference type="NCBI Taxonomy" id="3562"/>
    <lineage>
        <taxon>Eukaryota</taxon>
        <taxon>Viridiplantae</taxon>
        <taxon>Streptophyta</taxon>
        <taxon>Embryophyta</taxon>
        <taxon>Tracheophyta</taxon>
        <taxon>Spermatophyta</taxon>
        <taxon>Magnoliopsida</taxon>
        <taxon>eudicotyledons</taxon>
        <taxon>Gunneridae</taxon>
        <taxon>Pentapetalae</taxon>
        <taxon>Caryophyllales</taxon>
        <taxon>Chenopodiaceae</taxon>
        <taxon>Chenopodioideae</taxon>
        <taxon>Anserineae</taxon>
        <taxon>Spinacia</taxon>
    </lineage>
</organism>
<feature type="transit peptide" description="Chloroplast" evidence="6">
    <location>
        <begin position="1"/>
        <end status="unknown"/>
    </location>
</feature>
<feature type="chain" id="PRO_0000010439" description="Glucose-6-phosphate 1-dehydrogenase, chloroplastic">
    <location>
        <begin status="unknown"/>
        <end position="574"/>
    </location>
</feature>
<feature type="active site" description="Proton acceptor" evidence="2">
    <location>
        <position position="322"/>
    </location>
</feature>
<feature type="binding site" evidence="3">
    <location>
        <begin position="93"/>
        <end position="100"/>
    </location>
    <ligand>
        <name>NADP(+)</name>
        <dbReference type="ChEBI" id="CHEBI:58349"/>
        <label>1</label>
    </ligand>
</feature>
<feature type="binding site" evidence="3">
    <location>
        <position position="127"/>
    </location>
    <ligand>
        <name>NADP(+)</name>
        <dbReference type="ChEBI" id="CHEBI:58349"/>
        <label>1</label>
    </ligand>
</feature>
<feature type="binding site" evidence="3">
    <location>
        <position position="230"/>
    </location>
    <ligand>
        <name>D-glucose 6-phosphate</name>
        <dbReference type="ChEBI" id="CHEBI:61548"/>
    </ligand>
</feature>
<feature type="binding site" evidence="3">
    <location>
        <position position="230"/>
    </location>
    <ligand>
        <name>NADP(+)</name>
        <dbReference type="ChEBI" id="CHEBI:58349"/>
        <label>1</label>
    </ligand>
</feature>
<feature type="binding site" evidence="3">
    <location>
        <begin position="260"/>
        <end position="264"/>
    </location>
    <ligand>
        <name>D-glucose 6-phosphate</name>
        <dbReference type="ChEBI" id="CHEBI:61548"/>
    </ligand>
</feature>
<feature type="binding site" evidence="3">
    <location>
        <position position="298"/>
    </location>
    <ligand>
        <name>D-glucose 6-phosphate</name>
        <dbReference type="ChEBI" id="CHEBI:61548"/>
    </ligand>
</feature>
<feature type="binding site" evidence="3">
    <location>
        <position position="317"/>
    </location>
    <ligand>
        <name>D-glucose 6-phosphate</name>
        <dbReference type="ChEBI" id="CHEBI:61548"/>
    </ligand>
</feature>
<feature type="binding site" evidence="3">
    <location>
        <position position="415"/>
    </location>
    <ligand>
        <name>NADP(+)</name>
        <dbReference type="ChEBI" id="CHEBI:58349"/>
        <label>2</label>
    </ligand>
</feature>
<feature type="binding site" evidence="3">
    <location>
        <position position="418"/>
    </location>
    <ligand>
        <name>D-glucose 6-phosphate</name>
        <dbReference type="ChEBI" id="CHEBI:61548"/>
    </ligand>
</feature>
<feature type="binding site" evidence="3">
    <location>
        <position position="423"/>
    </location>
    <ligand>
        <name>D-glucose 6-phosphate</name>
        <dbReference type="ChEBI" id="CHEBI:61548"/>
    </ligand>
</feature>
<feature type="binding site" evidence="3">
    <location>
        <position position="424"/>
    </location>
    <ligand>
        <name>NADP(+)</name>
        <dbReference type="ChEBI" id="CHEBI:58349"/>
        <label>2</label>
    </ligand>
</feature>
<feature type="binding site" evidence="3">
    <location>
        <position position="428"/>
    </location>
    <ligand>
        <name>NADP(+)</name>
        <dbReference type="ChEBI" id="CHEBI:58349"/>
        <label>2</label>
    </ligand>
</feature>
<feature type="binding site" evidence="3">
    <location>
        <position position="457"/>
    </location>
    <ligand>
        <name>NADP(+)</name>
        <dbReference type="ChEBI" id="CHEBI:58349"/>
        <label>2</label>
    </ligand>
</feature>
<feature type="binding site" evidence="3">
    <location>
        <position position="459"/>
    </location>
    <ligand>
        <name>D-glucose 6-phosphate</name>
        <dbReference type="ChEBI" id="CHEBI:61548"/>
    </ligand>
</feature>
<feature type="binding site" evidence="3">
    <location>
        <begin position="465"/>
        <end position="467"/>
    </location>
    <ligand>
        <name>NADP(+)</name>
        <dbReference type="ChEBI" id="CHEBI:58349"/>
        <label>2</label>
    </ligand>
</feature>
<feature type="binding site" evidence="3">
    <location>
        <position position="550"/>
    </location>
    <ligand>
        <name>NADP(+)</name>
        <dbReference type="ChEBI" id="CHEBI:58349"/>
        <label>2</label>
    </ligand>
</feature>
<feature type="disulfide bond" description="Redox modulation" evidence="5">
    <location>
        <begin position="145"/>
        <end position="153"/>
    </location>
</feature>
<proteinExistence type="evidence at transcript level"/>